<keyword id="KW-0309">Germination</keyword>
<keyword id="KW-0472">Membrane</keyword>
<keyword id="KW-0812">Transmembrane</keyword>
<keyword id="KW-1133">Transmembrane helix</keyword>
<keyword id="KW-0813">Transport</keyword>
<feature type="chain" id="PRO_0000425704" description="Spore germination protein GerLB">
    <location>
        <begin position="1"/>
        <end position="374"/>
    </location>
</feature>
<feature type="transmembrane region" description="Helical" evidence="1">
    <location>
        <begin position="16"/>
        <end position="36"/>
    </location>
</feature>
<feature type="transmembrane region" description="Helical" evidence="1">
    <location>
        <begin position="44"/>
        <end position="64"/>
    </location>
</feature>
<feature type="transmembrane region" description="Helical" evidence="1">
    <location>
        <begin position="86"/>
        <end position="106"/>
    </location>
</feature>
<feature type="transmembrane region" description="Helical" evidence="1">
    <location>
        <begin position="122"/>
        <end position="142"/>
    </location>
</feature>
<feature type="transmembrane region" description="Helical" evidence="1">
    <location>
        <begin position="149"/>
        <end position="169"/>
    </location>
</feature>
<feature type="transmembrane region" description="Helical" evidence="1">
    <location>
        <begin position="192"/>
        <end position="212"/>
    </location>
</feature>
<feature type="transmembrane region" description="Helical" evidence="1">
    <location>
        <begin position="227"/>
        <end position="247"/>
    </location>
</feature>
<feature type="transmembrane region" description="Helical" evidence="1">
    <location>
        <begin position="279"/>
        <end position="301"/>
    </location>
</feature>
<feature type="transmembrane region" description="Helical" evidence="1">
    <location>
        <begin position="313"/>
        <end position="333"/>
    </location>
</feature>
<feature type="transmembrane region" description="Helical" evidence="1">
    <location>
        <begin position="341"/>
        <end position="361"/>
    </location>
</feature>
<name>GERLB_BACCE</name>
<sequence length="374" mass="41486">MKPFEYGDEEIGSREIGFAVSSTIIGIGALSMPRDIANQTLFSDGWIILLLGGLICAVLGWFVTRVAILFPKQNFVQYTSAHLTKPVAYTISSILVLTFAALTAYESRMISVISQTYLFSDTPIQLLSFFFLLVVIYGIAGSRAALLRLNVLFLPIVLIAIVLLSLLNINLMEINNLLPAFQTKVSQYAVGVKNSIFTFIGFEVALFYAVLLNNKTAKKAPMAVAKAVMVNVLSYILIYVTCISVFTYMTTRGLTYPTIELGKEIEIGGGFLERFDAIFFTTWIITIYNTTAMYYDVASLLFCAMFPKVKKQIFIFISAPIIFMVNMIPSSLNTLSSYGTYLAWIDMGCVVLAPLLVLIVYKIKRRNGGNETPS</sequence>
<proteinExistence type="inferred from homology"/>
<reference key="1">
    <citation type="journal article" date="2002" name="Microbiology">
        <title>Germination of Bacillus cereus spores in response to L-alanine and to inosine: the roles of gerL and gerQ operons.</title>
        <authorList>
            <person name="Barlass P.J."/>
            <person name="Houston C.W."/>
            <person name="Clements M.O."/>
            <person name="Moir A."/>
        </authorList>
    </citation>
    <scope>NUCLEOTIDE SEQUENCE [GENOMIC DNA]</scope>
    <scope>FUNCTION</scope>
    <source>
        <strain>ATCC 10876 / DSM 9378 / NRRL B-569</strain>
    </source>
</reference>
<comment type="function">
    <text evidence="2">Contributes to the L-alanine germination response.</text>
</comment>
<comment type="subcellular location">
    <subcellularLocation>
        <location evidence="3">Membrane</location>
        <topology evidence="3">Multi-pass membrane protein</topology>
    </subcellularLocation>
</comment>
<comment type="similarity">
    <text evidence="3">Belongs to the amino acid-polyamine-organocation (APC) superfamily. Spore germination protein (SGP) (TC 2.A.3.9) family.</text>
</comment>
<accession>Q93N69</accession>
<evidence type="ECO:0000255" key="1"/>
<evidence type="ECO:0000269" key="2">
    <source>
    </source>
</evidence>
<evidence type="ECO:0000305" key="3"/>
<organism>
    <name type="scientific">Bacillus cereus</name>
    <dbReference type="NCBI Taxonomy" id="1396"/>
    <lineage>
        <taxon>Bacteria</taxon>
        <taxon>Bacillati</taxon>
        <taxon>Bacillota</taxon>
        <taxon>Bacilli</taxon>
        <taxon>Bacillales</taxon>
        <taxon>Bacillaceae</taxon>
        <taxon>Bacillus</taxon>
        <taxon>Bacillus cereus group</taxon>
    </lineage>
</organism>
<gene>
    <name type="primary">gerLB</name>
</gene>
<dbReference type="EMBL" id="AF387344">
    <property type="protein sequence ID" value="AAK70462.1"/>
    <property type="molecule type" value="Genomic_DNA"/>
</dbReference>
<dbReference type="RefSeq" id="WP_000802011.1">
    <property type="nucleotide sequence ID" value="NZ_UFSU01000001.1"/>
</dbReference>
<dbReference type="SMR" id="Q93N69"/>
<dbReference type="eggNOG" id="COG0531">
    <property type="taxonomic scope" value="Bacteria"/>
</dbReference>
<dbReference type="GO" id="GO:0016020">
    <property type="term" value="C:membrane"/>
    <property type="evidence" value="ECO:0007669"/>
    <property type="project" value="UniProtKB-SubCell"/>
</dbReference>
<dbReference type="GO" id="GO:0009847">
    <property type="term" value="P:spore germination"/>
    <property type="evidence" value="ECO:0007669"/>
    <property type="project" value="InterPro"/>
</dbReference>
<dbReference type="InterPro" id="IPR004761">
    <property type="entry name" value="Spore_GerAB"/>
</dbReference>
<dbReference type="NCBIfam" id="TIGR00912">
    <property type="entry name" value="2A0309"/>
    <property type="match status" value="1"/>
</dbReference>
<dbReference type="PANTHER" id="PTHR34975">
    <property type="entry name" value="SPORE GERMINATION PROTEIN A2"/>
    <property type="match status" value="1"/>
</dbReference>
<dbReference type="PANTHER" id="PTHR34975:SF2">
    <property type="entry name" value="SPORE GERMINATION PROTEIN A2"/>
    <property type="match status" value="1"/>
</dbReference>
<dbReference type="Pfam" id="PF03845">
    <property type="entry name" value="Spore_permease"/>
    <property type="match status" value="1"/>
</dbReference>
<protein>
    <recommendedName>
        <fullName>Spore germination protein GerLB</fullName>
    </recommendedName>
</protein>